<comment type="function">
    <text evidence="1">Catalyzes the phosphorylation of methylthioribose into methylthioribose-1-phosphate.</text>
</comment>
<comment type="catalytic activity">
    <reaction evidence="1">
        <text>5-(methylsulfanyl)-D-ribose + ATP = 5-(methylsulfanyl)-alpha-D-ribose 1-phosphate + ADP + H(+)</text>
        <dbReference type="Rhea" id="RHEA:22312"/>
        <dbReference type="ChEBI" id="CHEBI:15378"/>
        <dbReference type="ChEBI" id="CHEBI:30616"/>
        <dbReference type="ChEBI" id="CHEBI:58533"/>
        <dbReference type="ChEBI" id="CHEBI:78440"/>
        <dbReference type="ChEBI" id="CHEBI:456216"/>
        <dbReference type="EC" id="2.7.1.100"/>
    </reaction>
</comment>
<comment type="pathway">
    <text evidence="1">Amino-acid biosynthesis; L-methionine biosynthesis via salvage pathway; S-methyl-5-thio-alpha-D-ribose 1-phosphate from S-methyl-5'-thioadenosine (hydrolase route): step 2/2.</text>
</comment>
<comment type="subunit">
    <text evidence="1">Homodimer.</text>
</comment>
<comment type="similarity">
    <text evidence="1">Belongs to the methylthioribose kinase family.</text>
</comment>
<evidence type="ECO:0000255" key="1">
    <source>
        <dbReference type="HAMAP-Rule" id="MF_01683"/>
    </source>
</evidence>
<name>MTNK_GEOSW</name>
<organism>
    <name type="scientific">Geobacillus sp. (strain WCH70)</name>
    <dbReference type="NCBI Taxonomy" id="471223"/>
    <lineage>
        <taxon>Bacteria</taxon>
        <taxon>Bacillati</taxon>
        <taxon>Bacillota</taxon>
        <taxon>Bacilli</taxon>
        <taxon>Bacillales</taxon>
        <taxon>Anoxybacillaceae</taxon>
        <taxon>Geobacillus</taxon>
    </lineage>
</organism>
<reference key="1">
    <citation type="submission" date="2009-06" db="EMBL/GenBank/DDBJ databases">
        <title>Complete sequence of chromosome of Geopacillus sp. WCH70.</title>
        <authorList>
            <consortium name="US DOE Joint Genome Institute"/>
            <person name="Lucas S."/>
            <person name="Copeland A."/>
            <person name="Lapidus A."/>
            <person name="Glavina del Rio T."/>
            <person name="Dalin E."/>
            <person name="Tice H."/>
            <person name="Bruce D."/>
            <person name="Goodwin L."/>
            <person name="Pitluck S."/>
            <person name="Chertkov O."/>
            <person name="Brettin T."/>
            <person name="Detter J.C."/>
            <person name="Han C."/>
            <person name="Larimer F."/>
            <person name="Land M."/>
            <person name="Hauser L."/>
            <person name="Kyrpides N."/>
            <person name="Mikhailova N."/>
            <person name="Brumm P."/>
            <person name="Mead D.A."/>
            <person name="Richardson P."/>
        </authorList>
    </citation>
    <scope>NUCLEOTIDE SEQUENCE [LARGE SCALE GENOMIC DNA]</scope>
    <source>
        <strain>WCH70</strain>
    </source>
</reference>
<gene>
    <name evidence="1" type="primary">mtnK</name>
    <name type="ordered locus">GWCH70_0847</name>
</gene>
<protein>
    <recommendedName>
        <fullName evidence="1">Methylthioribose kinase</fullName>
        <shortName evidence="1">MTR kinase</shortName>
        <ecNumber evidence="1">2.7.1.100</ecNumber>
    </recommendedName>
</protein>
<feature type="chain" id="PRO_1000215906" description="Methylthioribose kinase">
    <location>
        <begin position="1"/>
        <end position="400"/>
    </location>
</feature>
<feature type="binding site" evidence="1">
    <location>
        <position position="44"/>
    </location>
    <ligand>
        <name>ATP</name>
        <dbReference type="ChEBI" id="CHEBI:30616"/>
    </ligand>
</feature>
<feature type="binding site" evidence="1">
    <location>
        <position position="61"/>
    </location>
    <ligand>
        <name>ATP</name>
        <dbReference type="ChEBI" id="CHEBI:30616"/>
    </ligand>
</feature>
<feature type="binding site" evidence="1">
    <location>
        <begin position="115"/>
        <end position="117"/>
    </location>
    <ligand>
        <name>ATP</name>
        <dbReference type="ChEBI" id="CHEBI:30616"/>
    </ligand>
</feature>
<feature type="binding site" evidence="1">
    <location>
        <position position="233"/>
    </location>
    <ligand>
        <name>substrate</name>
    </ligand>
</feature>
<feature type="binding site" evidence="1">
    <location>
        <begin position="250"/>
        <end position="252"/>
    </location>
    <ligand>
        <name>ATP</name>
        <dbReference type="ChEBI" id="CHEBI:30616"/>
    </ligand>
</feature>
<feature type="binding site" evidence="1">
    <location>
        <position position="340"/>
    </location>
    <ligand>
        <name>substrate</name>
    </ligand>
</feature>
<accession>C5D7U6</accession>
<sequence>MPVSHPTVYEPLTEQGAISLAVRLGLFPEGTPLACREIGDGNLNLVFRVVDQQTKKGIIVKQALPYAKVVGESWPLTLKRAVIESNALRTFASYVPQYVPKVYYSDESLAITVMEDLSHLQIARKGLIEGKTYPLLSQHIGEFIAKTSFYTSDFGMNQQEKKQLAQSFVNPELCKITEDLVFTDPFFNHETNNFEDELRDDVEALWNDDKLHLEAAKLKRKFLTEGDALIHGDLHTGSIFASDEETKIIDPEFAFYGPFGFDIGQFFANLLLNALSRPEQQQEPLFAHIDKTWDVFSTVFSDLWRTHNVEPYAKTEGLLEDVLHHTFIDAIGFAGCEVIRRTIGLAHVADLDGIEDKEERLQAKRYALRLGRSLILQRETLSSTKEIRSLFAQTVLAATN</sequence>
<dbReference type="EC" id="2.7.1.100" evidence="1"/>
<dbReference type="EMBL" id="CP001638">
    <property type="protein sequence ID" value="ACS23727.1"/>
    <property type="molecule type" value="Genomic_DNA"/>
</dbReference>
<dbReference type="SMR" id="C5D7U6"/>
<dbReference type="STRING" id="471223.GWCH70_0847"/>
<dbReference type="KEGG" id="gwc:GWCH70_0847"/>
<dbReference type="eggNOG" id="COG4857">
    <property type="taxonomic scope" value="Bacteria"/>
</dbReference>
<dbReference type="HOGENOM" id="CLU_033681_0_0_9"/>
<dbReference type="OrthoDB" id="9777791at2"/>
<dbReference type="UniPathway" id="UPA00904">
    <property type="reaction ID" value="UER00872"/>
</dbReference>
<dbReference type="GO" id="GO:0005524">
    <property type="term" value="F:ATP binding"/>
    <property type="evidence" value="ECO:0007669"/>
    <property type="project" value="UniProtKB-UniRule"/>
</dbReference>
<dbReference type="GO" id="GO:0046522">
    <property type="term" value="F:S-methyl-5-thioribose kinase activity"/>
    <property type="evidence" value="ECO:0007669"/>
    <property type="project" value="UniProtKB-UniRule"/>
</dbReference>
<dbReference type="GO" id="GO:0019509">
    <property type="term" value="P:L-methionine salvage from methylthioadenosine"/>
    <property type="evidence" value="ECO:0007669"/>
    <property type="project" value="UniProtKB-UniRule"/>
</dbReference>
<dbReference type="Gene3D" id="3.90.1200.10">
    <property type="match status" value="1"/>
</dbReference>
<dbReference type="Gene3D" id="3.30.200.20">
    <property type="entry name" value="Phosphorylase Kinase, domain 1"/>
    <property type="match status" value="1"/>
</dbReference>
<dbReference type="HAMAP" id="MF_01683">
    <property type="entry name" value="Salvage_MtnK"/>
    <property type="match status" value="1"/>
</dbReference>
<dbReference type="InterPro" id="IPR002575">
    <property type="entry name" value="Aminoglycoside_PTrfase"/>
</dbReference>
<dbReference type="InterPro" id="IPR011009">
    <property type="entry name" value="Kinase-like_dom_sf"/>
</dbReference>
<dbReference type="InterPro" id="IPR009212">
    <property type="entry name" value="Methylthioribose_kinase"/>
</dbReference>
<dbReference type="NCBIfam" id="TIGR01767">
    <property type="entry name" value="MTRK"/>
    <property type="match status" value="1"/>
</dbReference>
<dbReference type="PANTHER" id="PTHR34273">
    <property type="entry name" value="METHYLTHIORIBOSE KINASE"/>
    <property type="match status" value="1"/>
</dbReference>
<dbReference type="PANTHER" id="PTHR34273:SF2">
    <property type="entry name" value="METHYLTHIORIBOSE KINASE"/>
    <property type="match status" value="1"/>
</dbReference>
<dbReference type="Pfam" id="PF01636">
    <property type="entry name" value="APH"/>
    <property type="match status" value="1"/>
</dbReference>
<dbReference type="PIRSF" id="PIRSF031134">
    <property type="entry name" value="MTRK"/>
    <property type="match status" value="1"/>
</dbReference>
<dbReference type="SUPFAM" id="SSF56112">
    <property type="entry name" value="Protein kinase-like (PK-like)"/>
    <property type="match status" value="1"/>
</dbReference>
<keyword id="KW-0028">Amino-acid biosynthesis</keyword>
<keyword id="KW-0067">ATP-binding</keyword>
<keyword id="KW-0418">Kinase</keyword>
<keyword id="KW-0486">Methionine biosynthesis</keyword>
<keyword id="KW-0547">Nucleotide-binding</keyword>
<keyword id="KW-0808">Transferase</keyword>
<proteinExistence type="inferred from homology"/>